<evidence type="ECO:0000250" key="1">
    <source>
        <dbReference type="UniProtKB" id="Q9Y2T3"/>
    </source>
</evidence>
<evidence type="ECO:0000269" key="2">
    <source>
    </source>
</evidence>
<evidence type="ECO:0000303" key="3">
    <source>
    </source>
</evidence>
<evidence type="ECO:0000305" key="4"/>
<evidence type="ECO:0000305" key="5">
    <source>
    </source>
</evidence>
<evidence type="ECO:0000312" key="6">
    <source>
        <dbReference type="EMBL" id="AAM49953.1"/>
    </source>
</evidence>
<evidence type="ECO:0000312" key="7">
    <source>
        <dbReference type="EMBL" id="AAN71291.1"/>
    </source>
</evidence>
<evidence type="ECO:0000312" key="8">
    <source>
        <dbReference type="FlyBase" id="FBgn0261436"/>
    </source>
</evidence>
<evidence type="ECO:0000312" key="9">
    <source>
        <dbReference type="Proteomes" id="UP000000803"/>
    </source>
</evidence>
<sequence>MATVFLGTVVHTKSFSEFESFEGGFLAVDDAGKIIGVGQDYHAWASSNPAHAKGLTEVHLSDYQFLMPGFVDCHIHAPQFAQLGLGLDMPLLDWLNTYTFPLEAKFSNHQYAQQVYQGVVEATLRCGTTLASYFATNHLESTLTLAREAVRQGQRALIGKVCSNCNSPEFYVETAEESVSATLAFVEGVRKLGSPMVMPTITPRFALSCSKELLKSLGDIAKRFDLHIQSHISENLEEIEMVKGIFKTSYAGAYDEAGLLTNKTVLAHGVHLEDDEVALLKVRGCSVAHCPTSNTMLSSGLCDVQRLVSGGVSVGLGTDVSGGNSVSIQDVLLRALDVSKHLDFFKKQNIRGTGVSKTQDFNYHQLKYKQALYLATLGGAKALSLDHLTGNFALGKDFDALLVDVSVVDKPLRRLSVDELVEKFIYTGSDRNIVEVFVAGKRIKQGYQ</sequence>
<reference evidence="9" key="1">
    <citation type="journal article" date="2000" name="Science">
        <title>The genome sequence of Drosophila melanogaster.</title>
        <authorList>
            <person name="Adams M.D."/>
            <person name="Celniker S.E."/>
            <person name="Holt R.A."/>
            <person name="Evans C.A."/>
            <person name="Gocayne J.D."/>
            <person name="Amanatides P.G."/>
            <person name="Scherer S.E."/>
            <person name="Li P.W."/>
            <person name="Hoskins R.A."/>
            <person name="Galle R.F."/>
            <person name="George R.A."/>
            <person name="Lewis S.E."/>
            <person name="Richards S."/>
            <person name="Ashburner M."/>
            <person name="Henderson S.N."/>
            <person name="Sutton G.G."/>
            <person name="Wortman J.R."/>
            <person name="Yandell M.D."/>
            <person name="Zhang Q."/>
            <person name="Chen L.X."/>
            <person name="Brandon R.C."/>
            <person name="Rogers Y.-H.C."/>
            <person name="Blazej R.G."/>
            <person name="Champe M."/>
            <person name="Pfeiffer B.D."/>
            <person name="Wan K.H."/>
            <person name="Doyle C."/>
            <person name="Baxter E.G."/>
            <person name="Helt G."/>
            <person name="Nelson C.R."/>
            <person name="Miklos G.L.G."/>
            <person name="Abril J.F."/>
            <person name="Agbayani A."/>
            <person name="An H.-J."/>
            <person name="Andrews-Pfannkoch C."/>
            <person name="Baldwin D."/>
            <person name="Ballew R.M."/>
            <person name="Basu A."/>
            <person name="Baxendale J."/>
            <person name="Bayraktaroglu L."/>
            <person name="Beasley E.M."/>
            <person name="Beeson K.Y."/>
            <person name="Benos P.V."/>
            <person name="Berman B.P."/>
            <person name="Bhandari D."/>
            <person name="Bolshakov S."/>
            <person name="Borkova D."/>
            <person name="Botchan M.R."/>
            <person name="Bouck J."/>
            <person name="Brokstein P."/>
            <person name="Brottier P."/>
            <person name="Burtis K.C."/>
            <person name="Busam D.A."/>
            <person name="Butler H."/>
            <person name="Cadieu E."/>
            <person name="Center A."/>
            <person name="Chandra I."/>
            <person name="Cherry J.M."/>
            <person name="Cawley S."/>
            <person name="Dahlke C."/>
            <person name="Davenport L.B."/>
            <person name="Davies P."/>
            <person name="de Pablos B."/>
            <person name="Delcher A."/>
            <person name="Deng Z."/>
            <person name="Mays A.D."/>
            <person name="Dew I."/>
            <person name="Dietz S.M."/>
            <person name="Dodson K."/>
            <person name="Doup L.E."/>
            <person name="Downes M."/>
            <person name="Dugan-Rocha S."/>
            <person name="Dunkov B.C."/>
            <person name="Dunn P."/>
            <person name="Durbin K.J."/>
            <person name="Evangelista C.C."/>
            <person name="Ferraz C."/>
            <person name="Ferriera S."/>
            <person name="Fleischmann W."/>
            <person name="Fosler C."/>
            <person name="Gabrielian A.E."/>
            <person name="Garg N.S."/>
            <person name="Gelbart W.M."/>
            <person name="Glasser K."/>
            <person name="Glodek A."/>
            <person name="Gong F."/>
            <person name="Gorrell J.H."/>
            <person name="Gu Z."/>
            <person name="Guan P."/>
            <person name="Harris M."/>
            <person name="Harris N.L."/>
            <person name="Harvey D.A."/>
            <person name="Heiman T.J."/>
            <person name="Hernandez J.R."/>
            <person name="Houck J."/>
            <person name="Hostin D."/>
            <person name="Houston K.A."/>
            <person name="Howland T.J."/>
            <person name="Wei M.-H."/>
            <person name="Ibegwam C."/>
            <person name="Jalali M."/>
            <person name="Kalush F."/>
            <person name="Karpen G.H."/>
            <person name="Ke Z."/>
            <person name="Kennison J.A."/>
            <person name="Ketchum K.A."/>
            <person name="Kimmel B.E."/>
            <person name="Kodira C.D."/>
            <person name="Kraft C.L."/>
            <person name="Kravitz S."/>
            <person name="Kulp D."/>
            <person name="Lai Z."/>
            <person name="Lasko P."/>
            <person name="Lei Y."/>
            <person name="Levitsky A.A."/>
            <person name="Li J.H."/>
            <person name="Li Z."/>
            <person name="Liang Y."/>
            <person name="Lin X."/>
            <person name="Liu X."/>
            <person name="Mattei B."/>
            <person name="McIntosh T.C."/>
            <person name="McLeod M.P."/>
            <person name="McPherson D."/>
            <person name="Merkulov G."/>
            <person name="Milshina N.V."/>
            <person name="Mobarry C."/>
            <person name="Morris J."/>
            <person name="Moshrefi A."/>
            <person name="Mount S.M."/>
            <person name="Moy M."/>
            <person name="Murphy B."/>
            <person name="Murphy L."/>
            <person name="Muzny D.M."/>
            <person name="Nelson D.L."/>
            <person name="Nelson D.R."/>
            <person name="Nelson K.A."/>
            <person name="Nixon K."/>
            <person name="Nusskern D.R."/>
            <person name="Pacleb J.M."/>
            <person name="Palazzolo M."/>
            <person name="Pittman G.S."/>
            <person name="Pan S."/>
            <person name="Pollard J."/>
            <person name="Puri V."/>
            <person name="Reese M.G."/>
            <person name="Reinert K."/>
            <person name="Remington K."/>
            <person name="Saunders R.D.C."/>
            <person name="Scheeler F."/>
            <person name="Shen H."/>
            <person name="Shue B.C."/>
            <person name="Siden-Kiamos I."/>
            <person name="Simpson M."/>
            <person name="Skupski M.P."/>
            <person name="Smith T.J."/>
            <person name="Spier E."/>
            <person name="Spradling A.C."/>
            <person name="Stapleton M."/>
            <person name="Strong R."/>
            <person name="Sun E."/>
            <person name="Svirskas R."/>
            <person name="Tector C."/>
            <person name="Turner R."/>
            <person name="Venter E."/>
            <person name="Wang A.H."/>
            <person name="Wang X."/>
            <person name="Wang Z.-Y."/>
            <person name="Wassarman D.A."/>
            <person name="Weinstock G.M."/>
            <person name="Weissenbach J."/>
            <person name="Williams S.M."/>
            <person name="Woodage T."/>
            <person name="Worley K.C."/>
            <person name="Wu D."/>
            <person name="Yang S."/>
            <person name="Yao Q.A."/>
            <person name="Ye J."/>
            <person name="Yeh R.-F."/>
            <person name="Zaveri J.S."/>
            <person name="Zhan M."/>
            <person name="Zhang G."/>
            <person name="Zhao Q."/>
            <person name="Zheng L."/>
            <person name="Zheng X.H."/>
            <person name="Zhong F.N."/>
            <person name="Zhong W."/>
            <person name="Zhou X."/>
            <person name="Zhu S.C."/>
            <person name="Zhu X."/>
            <person name="Smith H.O."/>
            <person name="Gibbs R.A."/>
            <person name="Myers E.W."/>
            <person name="Rubin G.M."/>
            <person name="Venter J.C."/>
        </authorList>
    </citation>
    <scope>NUCLEOTIDE SEQUENCE [LARGE SCALE GENOMIC DNA]</scope>
    <source>
        <strain evidence="9">Berkeley</strain>
    </source>
</reference>
<reference evidence="9" key="2">
    <citation type="journal article" date="2002" name="Genome Biol.">
        <title>Annotation of the Drosophila melanogaster euchromatic genome: a systematic review.</title>
        <authorList>
            <person name="Misra S."/>
            <person name="Crosby M.A."/>
            <person name="Mungall C.J."/>
            <person name="Matthews B.B."/>
            <person name="Campbell K.S."/>
            <person name="Hradecky P."/>
            <person name="Huang Y."/>
            <person name="Kaminker J.S."/>
            <person name="Millburn G.H."/>
            <person name="Prochnik S.E."/>
            <person name="Smith C.D."/>
            <person name="Tupy J.L."/>
            <person name="Whitfield E.J."/>
            <person name="Bayraktaroglu L."/>
            <person name="Berman B.P."/>
            <person name="Bettencourt B.R."/>
            <person name="Celniker S.E."/>
            <person name="de Grey A.D.N.J."/>
            <person name="Drysdale R.A."/>
            <person name="Harris N.L."/>
            <person name="Richter J."/>
            <person name="Russo S."/>
            <person name="Schroeder A.J."/>
            <person name="Shu S.Q."/>
            <person name="Stapleton M."/>
            <person name="Yamada C."/>
            <person name="Ashburner M."/>
            <person name="Gelbart W.M."/>
            <person name="Rubin G.M."/>
            <person name="Lewis S.E."/>
        </authorList>
    </citation>
    <scope>GENOME REANNOTATION</scope>
    <source>
        <strain evidence="9">Berkeley</strain>
    </source>
</reference>
<reference evidence="6 7" key="3">
    <citation type="journal article" date="2002" name="Genome Biol.">
        <title>A Drosophila full-length cDNA resource.</title>
        <authorList>
            <person name="Stapleton M."/>
            <person name="Carlson J.W."/>
            <person name="Brokstein P."/>
            <person name="Yu C."/>
            <person name="Champe M."/>
            <person name="George R.A."/>
            <person name="Guarin H."/>
            <person name="Kronmiller B."/>
            <person name="Pacleb J.M."/>
            <person name="Park S."/>
            <person name="Wan K.H."/>
            <person name="Rubin G.M."/>
            <person name="Celniker S.E."/>
        </authorList>
    </citation>
    <scope>NUCLEOTIDE SEQUENCE [LARGE SCALE MRNA]</scope>
    <source>
        <strain evidence="6 7">Berkeley</strain>
        <tissue evidence="6 7">Embryo</tissue>
    </source>
</reference>
<reference evidence="4" key="4">
    <citation type="journal article" date="2009" name="J. Biol. Chem.">
        <title>Guanine deaminase functions as dihydropterin deaminase in the biosynthesis of aurodrosopterin, a minor red eye pigment of Drosophila.</title>
        <authorList>
            <person name="Kim J."/>
            <person name="Park S.I."/>
            <person name="Ahn C."/>
            <person name="Kim H."/>
            <person name="Yim J."/>
        </authorList>
    </citation>
    <scope>FUNCTION</scope>
    <scope>CATALYTIC ACTIVITY</scope>
    <scope>ACTIVITY REGULATION</scope>
    <scope>BIOPHYSICOCHEMICAL PROPERTIES</scope>
    <scope>PATHWAY</scope>
    <scope>DEVELOPMENTAL STAGE</scope>
    <scope>IDENTIFICATION BY MASS SPECTROMETRY</scope>
</reference>
<feature type="chain" id="PRO_0000439491" description="Guanine deaminase">
    <location>
        <begin position="1"/>
        <end position="448"/>
    </location>
</feature>
<feature type="binding site" evidence="1">
    <location>
        <position position="74"/>
    </location>
    <ligand>
        <name>Zn(2+)</name>
        <dbReference type="ChEBI" id="CHEBI:29105"/>
    </ligand>
</feature>
<feature type="binding site" evidence="1">
    <location>
        <begin position="76"/>
        <end position="79"/>
    </location>
    <ligand>
        <name>substrate</name>
    </ligand>
</feature>
<feature type="binding site" evidence="1">
    <location>
        <position position="76"/>
    </location>
    <ligand>
        <name>Zn(2+)</name>
        <dbReference type="ChEBI" id="CHEBI:29105"/>
    </ligand>
</feature>
<feature type="binding site" evidence="1">
    <location>
        <begin position="204"/>
        <end position="205"/>
    </location>
    <ligand>
        <name>substrate</name>
    </ligand>
</feature>
<feature type="binding site" evidence="1">
    <location>
        <begin position="231"/>
        <end position="234"/>
    </location>
    <ligand>
        <name>substrate</name>
    </ligand>
</feature>
<feature type="binding site" evidence="1">
    <location>
        <position position="231"/>
    </location>
    <ligand>
        <name>Zn(2+)</name>
        <dbReference type="ChEBI" id="CHEBI:29105"/>
    </ligand>
</feature>
<feature type="binding site" evidence="1">
    <location>
        <position position="319"/>
    </location>
    <ligand>
        <name>substrate</name>
    </ligand>
</feature>
<feature type="binding site" evidence="1">
    <location>
        <position position="319"/>
    </location>
    <ligand>
        <name>Zn(2+)</name>
        <dbReference type="ChEBI" id="CHEBI:29105"/>
    </ligand>
</feature>
<comment type="function">
    <text evidence="2">Catalyzes the hydrolytic deamination of guanine, producing xanthine and ammonia. Also has 7,8-dihydropterin deaminase activity, which plays a role in synthesis of the red eye pigment aurodrosopterin.</text>
</comment>
<comment type="catalytic activity">
    <reaction evidence="2">
        <text>guanine + H2O + H(+) = xanthine + NH4(+)</text>
        <dbReference type="Rhea" id="RHEA:14665"/>
        <dbReference type="ChEBI" id="CHEBI:15377"/>
        <dbReference type="ChEBI" id="CHEBI:15378"/>
        <dbReference type="ChEBI" id="CHEBI:16235"/>
        <dbReference type="ChEBI" id="CHEBI:17712"/>
        <dbReference type="ChEBI" id="CHEBI:28938"/>
        <dbReference type="EC" id="3.5.4.3"/>
    </reaction>
</comment>
<comment type="cofactor">
    <cofactor evidence="1">
        <name>Zn(2+)</name>
        <dbReference type="ChEBI" id="CHEBI:29105"/>
    </cofactor>
</comment>
<comment type="activity regulation">
    <text evidence="2">Strongly inhibited by p-chloromercuribenzoate (PCMB). Potassium cyanide (KCN) strongly inhibits activity towards 7,8-dihydropterin but has almost no effect on activity towards guanine. Pterin inhibits activity towards guanine but has little effect on activity towards 7,8-dihydropterin.</text>
</comment>
<comment type="biophysicochemical properties">
    <kinetics>
        <KM evidence="2">75.7 uM for guanine</KM>
        <KM evidence="2">1621 uM for 7,8-dihydropterin</KM>
        <Vmax evidence="2">23.6 nmol/min/ug enzyme with guanine as substrate</Vmax>
        <Vmax evidence="2">8.9 nmol/min/ug enzyme with 7,8-dihydropterin as substrate</Vmax>
    </kinetics>
    <phDependence>
        <text evidence="2">Optimum pH is 7.5.</text>
    </phDependence>
    <temperatureDependence>
        <text evidence="2">Optimum temperature is 40 degrees Celsius.</text>
    </temperatureDependence>
</comment>
<comment type="pathway">
    <text evidence="5">Purine metabolism; guanine degradation; xanthine from guanine: step 1/1.</text>
</comment>
<comment type="developmental stage">
    <text evidence="2">Peak dihydropterin deaminase activity is observed in late pupae and newly eclosed adults, which correlates with the time of eye pigment formation.</text>
</comment>
<comment type="similarity">
    <text evidence="4">Belongs to the metallo-dependent hydrolases superfamily. ATZ/TRZ family.</text>
</comment>
<keyword id="KW-0378">Hydrolase</keyword>
<keyword id="KW-0479">Metal-binding</keyword>
<keyword id="KW-1185">Reference proteome</keyword>
<keyword id="KW-0862">Zinc</keyword>
<protein>
    <recommendedName>
        <fullName evidence="3">Guanine deaminase</fullName>
        <ecNumber evidence="2">3.5.4.3</ecNumber>
    </recommendedName>
    <alternativeName>
        <fullName evidence="3">Dihydropterin deaminase</fullName>
        <ecNumber evidence="5">3.5.4.-</ecNumber>
    </alternativeName>
</protein>
<organism evidence="9">
    <name type="scientific">Drosophila melanogaster</name>
    <name type="common">Fruit fly</name>
    <dbReference type="NCBI Taxonomy" id="7227"/>
    <lineage>
        <taxon>Eukaryota</taxon>
        <taxon>Metazoa</taxon>
        <taxon>Ecdysozoa</taxon>
        <taxon>Arthropoda</taxon>
        <taxon>Hexapoda</taxon>
        <taxon>Insecta</taxon>
        <taxon>Pterygota</taxon>
        <taxon>Neoptera</taxon>
        <taxon>Endopterygota</taxon>
        <taxon>Diptera</taxon>
        <taxon>Brachycera</taxon>
        <taxon>Muscomorpha</taxon>
        <taxon>Ephydroidea</taxon>
        <taxon>Drosophilidae</taxon>
        <taxon>Drosophila</taxon>
        <taxon>Sophophora</taxon>
    </lineage>
</organism>
<dbReference type="EC" id="3.5.4.3" evidence="2"/>
<dbReference type="EC" id="3.5.4.-" evidence="5"/>
<dbReference type="EMBL" id="AE014297">
    <property type="protein sequence ID" value="AAF52167.1"/>
    <property type="molecule type" value="Genomic_DNA"/>
</dbReference>
<dbReference type="EMBL" id="AY118584">
    <property type="protein sequence ID" value="AAM49953.1"/>
    <property type="molecule type" value="mRNA"/>
</dbReference>
<dbReference type="EMBL" id="BT001536">
    <property type="protein sequence ID" value="AAN71291.1"/>
    <property type="molecule type" value="mRNA"/>
</dbReference>
<dbReference type="RefSeq" id="NP_649439.1">
    <property type="nucleotide sequence ID" value="NM_141182.3"/>
</dbReference>
<dbReference type="SMR" id="Q9VMY9"/>
<dbReference type="FunCoup" id="Q9VMY9">
    <property type="interactions" value="468"/>
</dbReference>
<dbReference type="IntAct" id="Q9VMY9">
    <property type="interactions" value="4"/>
</dbReference>
<dbReference type="STRING" id="7227.FBpp0078625"/>
<dbReference type="MEROPS" id="M38.981"/>
<dbReference type="PaxDb" id="7227-FBpp0078625"/>
<dbReference type="DNASU" id="40528"/>
<dbReference type="EnsemblMetazoa" id="FBtr0078986">
    <property type="protein sequence ID" value="FBpp0078625"/>
    <property type="gene ID" value="FBgn0261436"/>
</dbReference>
<dbReference type="GeneID" id="40528"/>
<dbReference type="KEGG" id="dme:Dmel_CG18143"/>
<dbReference type="UCSC" id="CG18143-RA">
    <property type="organism name" value="d. melanogaster"/>
</dbReference>
<dbReference type="AGR" id="FB:FBgn0261436"/>
<dbReference type="CTD" id="40528"/>
<dbReference type="FlyBase" id="FBgn0261436">
    <property type="gene designation" value="DhpD"/>
</dbReference>
<dbReference type="VEuPathDB" id="VectorBase:FBgn0261436"/>
<dbReference type="eggNOG" id="KOG3968">
    <property type="taxonomic scope" value="Eukaryota"/>
</dbReference>
<dbReference type="GeneTree" id="ENSGT00390000017130"/>
<dbReference type="HOGENOM" id="CLU_012358_0_1_1"/>
<dbReference type="InParanoid" id="Q9VMY9"/>
<dbReference type="OMA" id="CVHMNDS"/>
<dbReference type="OrthoDB" id="194468at2759"/>
<dbReference type="PhylomeDB" id="Q9VMY9"/>
<dbReference type="BioCyc" id="MetaCyc:MONOMER-18459"/>
<dbReference type="Reactome" id="R-DME-74259">
    <property type="pathway name" value="Purine catabolism"/>
</dbReference>
<dbReference type="SignaLink" id="Q9VMY9"/>
<dbReference type="UniPathway" id="UPA00603">
    <property type="reaction ID" value="UER00660"/>
</dbReference>
<dbReference type="BioGRID-ORCS" id="40528">
    <property type="hits" value="1 hit in 1 CRISPR screen"/>
</dbReference>
<dbReference type="GenomeRNAi" id="40528"/>
<dbReference type="PRO" id="PR:Q9VMY9"/>
<dbReference type="Proteomes" id="UP000000803">
    <property type="component" value="Chromosome 3R"/>
</dbReference>
<dbReference type="Bgee" id="FBgn0261436">
    <property type="expression patterns" value="Expressed in capitellum (Drosophila) and 101 other cell types or tissues"/>
</dbReference>
<dbReference type="GO" id="GO:0005829">
    <property type="term" value="C:cytosol"/>
    <property type="evidence" value="ECO:0000318"/>
    <property type="project" value="GO_Central"/>
</dbReference>
<dbReference type="GO" id="GO:0004153">
    <property type="term" value="F:dihydropterin deaminase activity"/>
    <property type="evidence" value="ECO:0000314"/>
    <property type="project" value="FlyBase"/>
</dbReference>
<dbReference type="GO" id="GO:0008892">
    <property type="term" value="F:guanine deaminase activity"/>
    <property type="evidence" value="ECO:0000314"/>
    <property type="project" value="FlyBase"/>
</dbReference>
<dbReference type="GO" id="GO:0008270">
    <property type="term" value="F:zinc ion binding"/>
    <property type="evidence" value="ECO:0000318"/>
    <property type="project" value="GO_Central"/>
</dbReference>
<dbReference type="GO" id="GO:0051067">
    <property type="term" value="P:dihydropteridine metabolic process"/>
    <property type="evidence" value="ECO:0000314"/>
    <property type="project" value="FlyBase"/>
</dbReference>
<dbReference type="GO" id="GO:0006726">
    <property type="term" value="P:eye pigment biosynthetic process"/>
    <property type="evidence" value="ECO:0000315"/>
    <property type="project" value="FlyBase"/>
</dbReference>
<dbReference type="GO" id="GO:0006147">
    <property type="term" value="P:guanine catabolic process"/>
    <property type="evidence" value="ECO:0007669"/>
    <property type="project" value="UniProtKB-UniPathway"/>
</dbReference>
<dbReference type="GO" id="GO:0046098">
    <property type="term" value="P:guanine metabolic process"/>
    <property type="evidence" value="ECO:0000315"/>
    <property type="project" value="FlyBase"/>
</dbReference>
<dbReference type="CDD" id="cd01303">
    <property type="entry name" value="GDEase"/>
    <property type="match status" value="1"/>
</dbReference>
<dbReference type="FunFam" id="3.20.20.140:FF:000022">
    <property type="entry name" value="Guanine deaminase"/>
    <property type="match status" value="1"/>
</dbReference>
<dbReference type="Gene3D" id="3.20.20.140">
    <property type="entry name" value="Metal-dependent hydrolases"/>
    <property type="match status" value="1"/>
</dbReference>
<dbReference type="Gene3D" id="2.30.40.10">
    <property type="entry name" value="Urease, subunit C, domain 1"/>
    <property type="match status" value="1"/>
</dbReference>
<dbReference type="InterPro" id="IPR006680">
    <property type="entry name" value="Amidohydro-rel"/>
</dbReference>
<dbReference type="InterPro" id="IPR014311">
    <property type="entry name" value="Guanine_deaminase"/>
</dbReference>
<dbReference type="InterPro" id="IPR011059">
    <property type="entry name" value="Metal-dep_hydrolase_composite"/>
</dbReference>
<dbReference type="InterPro" id="IPR032466">
    <property type="entry name" value="Metal_Hydrolase"/>
</dbReference>
<dbReference type="InterPro" id="IPR051607">
    <property type="entry name" value="Metallo-dep_hydrolases"/>
</dbReference>
<dbReference type="NCBIfam" id="TIGR02967">
    <property type="entry name" value="guan_deamin"/>
    <property type="match status" value="1"/>
</dbReference>
<dbReference type="PANTHER" id="PTHR11271">
    <property type="entry name" value="GUANINE DEAMINASE"/>
    <property type="match status" value="1"/>
</dbReference>
<dbReference type="PANTHER" id="PTHR11271:SF6">
    <property type="entry name" value="GUANINE DEAMINASE"/>
    <property type="match status" value="1"/>
</dbReference>
<dbReference type="Pfam" id="PF01979">
    <property type="entry name" value="Amidohydro_1"/>
    <property type="match status" value="1"/>
</dbReference>
<dbReference type="SUPFAM" id="SSF51556">
    <property type="entry name" value="Metallo-dependent hydrolases"/>
    <property type="match status" value="1"/>
</dbReference>
<gene>
    <name evidence="8" type="primary">DhpD</name>
    <name evidence="8" type="ORF">CG18143</name>
</gene>
<proteinExistence type="evidence at protein level"/>
<name>GUAD_DROME</name>
<accession>Q9VMY9</accession>